<organism>
    <name type="scientific">Variovorax paradoxus (strain S110)</name>
    <dbReference type="NCBI Taxonomy" id="543728"/>
    <lineage>
        <taxon>Bacteria</taxon>
        <taxon>Pseudomonadati</taxon>
        <taxon>Pseudomonadota</taxon>
        <taxon>Betaproteobacteria</taxon>
        <taxon>Burkholderiales</taxon>
        <taxon>Comamonadaceae</taxon>
        <taxon>Variovorax</taxon>
    </lineage>
</organism>
<proteinExistence type="inferred from homology"/>
<dbReference type="EC" id="2.4.1.21" evidence="1"/>
<dbReference type="EMBL" id="CP001635">
    <property type="protein sequence ID" value="ACS17075.1"/>
    <property type="molecule type" value="Genomic_DNA"/>
</dbReference>
<dbReference type="SMR" id="C5CJ75"/>
<dbReference type="STRING" id="543728.Vapar_0412"/>
<dbReference type="CAZy" id="GT5">
    <property type="family name" value="Glycosyltransferase Family 5"/>
</dbReference>
<dbReference type="KEGG" id="vap:Vapar_0412"/>
<dbReference type="eggNOG" id="COG0297">
    <property type="taxonomic scope" value="Bacteria"/>
</dbReference>
<dbReference type="HOGENOM" id="CLU_009583_18_4_4"/>
<dbReference type="OrthoDB" id="9808590at2"/>
<dbReference type="UniPathway" id="UPA00164"/>
<dbReference type="GO" id="GO:0005829">
    <property type="term" value="C:cytosol"/>
    <property type="evidence" value="ECO:0007669"/>
    <property type="project" value="TreeGrafter"/>
</dbReference>
<dbReference type="GO" id="GO:0009011">
    <property type="term" value="F:alpha-1,4-glucan glucosyltransferase (ADP-glucose donor) activity"/>
    <property type="evidence" value="ECO:0007669"/>
    <property type="project" value="UniProtKB-UniRule"/>
</dbReference>
<dbReference type="GO" id="GO:0004373">
    <property type="term" value="F:alpha-1,4-glucan glucosyltransferase (UDP-glucose donor) activity"/>
    <property type="evidence" value="ECO:0007669"/>
    <property type="project" value="InterPro"/>
</dbReference>
<dbReference type="GO" id="GO:0005978">
    <property type="term" value="P:glycogen biosynthetic process"/>
    <property type="evidence" value="ECO:0007669"/>
    <property type="project" value="UniProtKB-UniRule"/>
</dbReference>
<dbReference type="CDD" id="cd03791">
    <property type="entry name" value="GT5_Glycogen_synthase_DULL1-like"/>
    <property type="match status" value="1"/>
</dbReference>
<dbReference type="Gene3D" id="3.40.50.2000">
    <property type="entry name" value="Glycogen Phosphorylase B"/>
    <property type="match status" value="2"/>
</dbReference>
<dbReference type="HAMAP" id="MF_00484">
    <property type="entry name" value="Glycogen_synth"/>
    <property type="match status" value="1"/>
</dbReference>
<dbReference type="InterPro" id="IPR001296">
    <property type="entry name" value="Glyco_trans_1"/>
</dbReference>
<dbReference type="InterPro" id="IPR011835">
    <property type="entry name" value="GS/SS"/>
</dbReference>
<dbReference type="InterPro" id="IPR013534">
    <property type="entry name" value="Starch_synth_cat_dom"/>
</dbReference>
<dbReference type="NCBIfam" id="TIGR02095">
    <property type="entry name" value="glgA"/>
    <property type="match status" value="1"/>
</dbReference>
<dbReference type="NCBIfam" id="NF001899">
    <property type="entry name" value="PRK00654.1-2"/>
    <property type="match status" value="1"/>
</dbReference>
<dbReference type="PANTHER" id="PTHR45825:SF11">
    <property type="entry name" value="ALPHA AMYLASE DOMAIN-CONTAINING PROTEIN"/>
    <property type="match status" value="1"/>
</dbReference>
<dbReference type="PANTHER" id="PTHR45825">
    <property type="entry name" value="GRANULE-BOUND STARCH SYNTHASE 1, CHLOROPLASTIC/AMYLOPLASTIC"/>
    <property type="match status" value="1"/>
</dbReference>
<dbReference type="Pfam" id="PF08323">
    <property type="entry name" value="Glyco_transf_5"/>
    <property type="match status" value="1"/>
</dbReference>
<dbReference type="Pfam" id="PF00534">
    <property type="entry name" value="Glycos_transf_1"/>
    <property type="match status" value="1"/>
</dbReference>
<dbReference type="SUPFAM" id="SSF53756">
    <property type="entry name" value="UDP-Glycosyltransferase/glycogen phosphorylase"/>
    <property type="match status" value="1"/>
</dbReference>
<name>GLGA_VARPS</name>
<accession>C5CJ75</accession>
<gene>
    <name evidence="1" type="primary">glgA</name>
    <name type="ordered locus">Vapar_0412</name>
</gene>
<evidence type="ECO:0000255" key="1">
    <source>
        <dbReference type="HAMAP-Rule" id="MF_00484"/>
    </source>
</evidence>
<reference key="1">
    <citation type="journal article" date="2011" name="J. Bacteriol.">
        <title>Complete genome sequence of the metabolically versatile plant growth-promoting endophyte, Variovorax paradoxus S110.</title>
        <authorList>
            <person name="Han J.I."/>
            <person name="Choi H.K."/>
            <person name="Lee S.W."/>
            <person name="Orwin P.M."/>
            <person name="Kim J."/>
            <person name="Laroe S.L."/>
            <person name="Kim T.G."/>
            <person name="O'Neil J."/>
            <person name="Leadbetter J.R."/>
            <person name="Lee S.Y."/>
            <person name="Hur C.G."/>
            <person name="Spain J.C."/>
            <person name="Ovchinnikova G."/>
            <person name="Goodwin L."/>
            <person name="Han C."/>
        </authorList>
    </citation>
    <scope>NUCLEOTIDE SEQUENCE [LARGE SCALE GENOMIC DNA]</scope>
    <source>
        <strain>S110</strain>
    </source>
</reference>
<comment type="function">
    <text evidence="1">Synthesizes alpha-1,4-glucan chains using ADP-glucose.</text>
</comment>
<comment type="catalytic activity">
    <reaction evidence="1">
        <text>[(1-&gt;4)-alpha-D-glucosyl](n) + ADP-alpha-D-glucose = [(1-&gt;4)-alpha-D-glucosyl](n+1) + ADP + H(+)</text>
        <dbReference type="Rhea" id="RHEA:18189"/>
        <dbReference type="Rhea" id="RHEA-COMP:9584"/>
        <dbReference type="Rhea" id="RHEA-COMP:9587"/>
        <dbReference type="ChEBI" id="CHEBI:15378"/>
        <dbReference type="ChEBI" id="CHEBI:15444"/>
        <dbReference type="ChEBI" id="CHEBI:57498"/>
        <dbReference type="ChEBI" id="CHEBI:456216"/>
        <dbReference type="EC" id="2.4.1.21"/>
    </reaction>
</comment>
<comment type="pathway">
    <text evidence="1">Glycan biosynthesis; glycogen biosynthesis.</text>
</comment>
<comment type="similarity">
    <text evidence="1">Belongs to the glycosyltransferase 1 family. Bacterial/plant glycogen synthase subfamily.</text>
</comment>
<keyword id="KW-0320">Glycogen biosynthesis</keyword>
<keyword id="KW-0328">Glycosyltransferase</keyword>
<keyword id="KW-0808">Transferase</keyword>
<sequence length="495" mass="53194">MRILQVSAELFPLLKTGGLADVAGALPLALMAAGQDARVLLPGFPAILAGVRELAPVAEFTAPWGPERFGLRAGRIAIDGAAAPITAYVIDAPVLYDRPGNPYEDATRQPYGDNHRRFALLGWAAAQLAQGLDPAWQPEVVHAHDWHAGLAPAYLHFAREAGLTRTGSVFTVHNLAYQGISAPWNFADLGLPAPAFHMNGLEYHGQVSFMKGGLYFADRLTTVSPTYAREIQTPEQGFGLDGLLRLRGGVLTGILNAVDDEVWNPATDSALVQGYHTPDGRHMAGKARCKAVLQHQLGLAERPDAPLFILVSRLTEQKGLHLVLGGLDTLLAEGGQLALLGSGEAGLEQAFRERAAAAPRAVSVTIGYNETLAHQLFGGGDVTLVPSLFEPCGLTQMYGLKYGSLPLVRRVGGLADTVVDCTLEDMASGHATGFVFDRFDAADYDRALRRAFALYQRAPDWRRVRGNAMRRPADWASAAGQYIEVYRQALESAGT</sequence>
<protein>
    <recommendedName>
        <fullName evidence="1">Glycogen synthase</fullName>
        <ecNumber evidence="1">2.4.1.21</ecNumber>
    </recommendedName>
    <alternativeName>
        <fullName evidence="1">Starch [bacterial glycogen] synthase</fullName>
    </alternativeName>
</protein>
<feature type="chain" id="PRO_1000206435" description="Glycogen synthase">
    <location>
        <begin position="1"/>
        <end position="495"/>
    </location>
</feature>
<feature type="binding site" evidence="1">
    <location>
        <position position="15"/>
    </location>
    <ligand>
        <name>ADP-alpha-D-glucose</name>
        <dbReference type="ChEBI" id="CHEBI:57498"/>
    </ligand>
</feature>